<feature type="chain" id="PRO_0000194085" description="Cytochrome c oxidase polypeptide 4, mitochondrial">
    <location>
        <begin position="1"/>
        <end position="19" status="greater than"/>
    </location>
</feature>
<feature type="non-consecutive residues" evidence="3">
    <location>
        <begin position="9"/>
        <end position="10"/>
    </location>
</feature>
<feature type="non-terminal residue">
    <location>
        <position position="19"/>
    </location>
</feature>
<comment type="function">
    <text evidence="2">Component of the cytochrome c oxidase, the last enzyme in the mitochondrial electron transport chain which drives oxidative phosphorylation. The respiratory chain contains 3 multisubunit complexes succinate dehydrogenase (complex II, CII), ubiquinol-cytochrome c oxidoreductase (cytochrome b-c1 complex, complex III, CIII) and cytochrome c oxidase (complex IV, CIV), that cooperate to transfer electrons derived from NADH and succinate to molecular oxygen, creating an electrochemical gradient over the inner membrane that drives transmembrane transport and the ATP synthase. Cytochrome c oxidase is the component of the respiratory chain that catalyzes the reduction of oxygen to water. Electrons originating from reduced cytochrome c in the intermembrane space (IMS) are transferred via the dinuclear copper A center (CU(A)) of subunit 2 and heme A of subunit 1 to the active site in subunit 1, a binuclear center (BNC) formed by heme A3 and copper B (CU(B)). The BNC reduces molecular oxygen to 2 water molecules using 4 electrons from cytochrome c in the IMS and 4 protons from the mitochondrial matrix.</text>
</comment>
<comment type="pathway">
    <text evidence="2">Energy metabolism; oxidative phosphorylation.</text>
</comment>
<comment type="subunit">
    <text evidence="1">Component of the cytochrome c oxidase (complex IV, CIV), a multisubunit enzyme composed of 14 subunits. The complex is composed of a catalytic core of 3 subunits MT-CO1, MT-CO2 and MT-CO3, encoded in the mitochondrial DNA, and 11 supernumerary subunits COX4I, COX5A, COX5B, COX6A, COX6B, COX6C, COX7A, COX7B, COX7C, COX8 and NDUFA4, which are encoded in the nuclear genome. The complex exists as a monomer or a dimer and forms supercomplexes (SCs) in the inner mitochondrial membrane with NADH-ubiquinone oxidoreductase (complex I, CI) and ubiquinol-cytochrome c oxidoreductase (cytochrome b-c1 complex, complex III, CIII), resulting in different assemblies (supercomplex SCI(1)III(2)IV(1) and megacomplex MCI(2)III(2)IV(2)).</text>
</comment>
<comment type="subcellular location">
    <subcellularLocation>
        <location evidence="1">Mitochondrion inner membrane</location>
        <topology evidence="1">Single-pass membrane protein</topology>
    </subcellularLocation>
</comment>
<comment type="similarity">
    <text evidence="3">Belongs to the cytochrome c oxidase IV family.</text>
</comment>
<name>COX4_ONCMY</name>
<reference key="1">
    <citation type="journal article" date="1994" name="Eur. J. Biochem.">
        <title>Identification of tissue-specific isoforms for subunits Vb and VIIa of cytochrome c oxidase isolated from rainbow trout.</title>
        <authorList>
            <person name="Freund R."/>
            <person name="Kadenbach B."/>
        </authorList>
    </citation>
    <scope>PROTEIN SEQUENCE</scope>
    <source>
        <tissue>Heart</tissue>
    </source>
</reference>
<protein>
    <recommendedName>
        <fullName>Cytochrome c oxidase polypeptide 4, mitochondrial</fullName>
    </recommendedName>
    <alternativeName>
        <fullName>Cytochrome c oxidase polypeptide IV</fullName>
    </alternativeName>
</protein>
<organism>
    <name type="scientific">Oncorhynchus mykiss</name>
    <name type="common">Rainbow trout</name>
    <name type="synonym">Salmo gairdneri</name>
    <dbReference type="NCBI Taxonomy" id="8022"/>
    <lineage>
        <taxon>Eukaryota</taxon>
        <taxon>Metazoa</taxon>
        <taxon>Chordata</taxon>
        <taxon>Craniata</taxon>
        <taxon>Vertebrata</taxon>
        <taxon>Euteleostomi</taxon>
        <taxon>Actinopterygii</taxon>
        <taxon>Neopterygii</taxon>
        <taxon>Teleostei</taxon>
        <taxon>Protacanthopterygii</taxon>
        <taxon>Salmoniformes</taxon>
        <taxon>Salmonidae</taxon>
        <taxon>Salmoninae</taxon>
        <taxon>Oncorhynchus</taxon>
    </lineage>
</organism>
<sequence>XXHGEVEVSAXGKNLSPXV</sequence>
<evidence type="ECO:0000250" key="1">
    <source>
        <dbReference type="UniProtKB" id="P00423"/>
    </source>
</evidence>
<evidence type="ECO:0000250" key="2">
    <source>
        <dbReference type="UniProtKB" id="P00424"/>
    </source>
</evidence>
<evidence type="ECO:0000305" key="3"/>
<accession>P80327</accession>
<keyword id="KW-0903">Direct protein sequencing</keyword>
<keyword id="KW-0472">Membrane</keyword>
<keyword id="KW-0496">Mitochondrion</keyword>
<keyword id="KW-0999">Mitochondrion inner membrane</keyword>
<keyword id="KW-0560">Oxidoreductase</keyword>
<proteinExistence type="evidence at protein level"/>
<dbReference type="PIR" id="S43624">
    <property type="entry name" value="S43624"/>
</dbReference>
<dbReference type="UniPathway" id="UPA00705"/>
<dbReference type="Proteomes" id="UP000694395">
    <property type="component" value="Unplaced"/>
</dbReference>
<dbReference type="GO" id="GO:0005743">
    <property type="term" value="C:mitochondrial inner membrane"/>
    <property type="evidence" value="ECO:0007669"/>
    <property type="project" value="UniProtKB-SubCell"/>
</dbReference>
<dbReference type="GO" id="GO:0016491">
    <property type="term" value="F:oxidoreductase activity"/>
    <property type="evidence" value="ECO:0007669"/>
    <property type="project" value="UniProtKB-KW"/>
</dbReference>
<dbReference type="GO" id="GO:0006119">
    <property type="term" value="P:oxidative phosphorylation"/>
    <property type="evidence" value="ECO:0007669"/>
    <property type="project" value="UniProtKB-UniPathway"/>
</dbReference>